<dbReference type="EMBL" id="AP009384">
    <property type="protein sequence ID" value="BAF87734.1"/>
    <property type="molecule type" value="Genomic_DNA"/>
</dbReference>
<dbReference type="RefSeq" id="WP_012170264.1">
    <property type="nucleotide sequence ID" value="NC_009937.1"/>
</dbReference>
<dbReference type="SMR" id="A8I4I6"/>
<dbReference type="STRING" id="438753.AZC_1736"/>
<dbReference type="KEGG" id="azc:AZC_1736"/>
<dbReference type="eggNOG" id="COG1826">
    <property type="taxonomic scope" value="Bacteria"/>
</dbReference>
<dbReference type="HOGENOM" id="CLU_086034_5_0_5"/>
<dbReference type="Proteomes" id="UP000000270">
    <property type="component" value="Chromosome"/>
</dbReference>
<dbReference type="GO" id="GO:0033281">
    <property type="term" value="C:TAT protein transport complex"/>
    <property type="evidence" value="ECO:0007669"/>
    <property type="project" value="UniProtKB-UniRule"/>
</dbReference>
<dbReference type="GO" id="GO:0008320">
    <property type="term" value="F:protein transmembrane transporter activity"/>
    <property type="evidence" value="ECO:0007669"/>
    <property type="project" value="UniProtKB-UniRule"/>
</dbReference>
<dbReference type="GO" id="GO:0043953">
    <property type="term" value="P:protein transport by the Tat complex"/>
    <property type="evidence" value="ECO:0007669"/>
    <property type="project" value="UniProtKB-UniRule"/>
</dbReference>
<dbReference type="Gene3D" id="1.20.5.3310">
    <property type="match status" value="1"/>
</dbReference>
<dbReference type="HAMAP" id="MF_00236">
    <property type="entry name" value="TatA_E"/>
    <property type="match status" value="1"/>
</dbReference>
<dbReference type="InterPro" id="IPR003369">
    <property type="entry name" value="TatA/B/E"/>
</dbReference>
<dbReference type="InterPro" id="IPR006312">
    <property type="entry name" value="TatA/E"/>
</dbReference>
<dbReference type="NCBIfam" id="NF001940">
    <property type="entry name" value="PRK00720.1"/>
    <property type="match status" value="1"/>
</dbReference>
<dbReference type="NCBIfam" id="TIGR01411">
    <property type="entry name" value="tatAE"/>
    <property type="match status" value="1"/>
</dbReference>
<dbReference type="PANTHER" id="PTHR42982">
    <property type="entry name" value="SEC-INDEPENDENT PROTEIN TRANSLOCASE PROTEIN TATA"/>
    <property type="match status" value="1"/>
</dbReference>
<dbReference type="PANTHER" id="PTHR42982:SF1">
    <property type="entry name" value="SEC-INDEPENDENT PROTEIN TRANSLOCASE PROTEIN TATA"/>
    <property type="match status" value="1"/>
</dbReference>
<dbReference type="Pfam" id="PF02416">
    <property type="entry name" value="TatA_B_E"/>
    <property type="match status" value="1"/>
</dbReference>
<reference key="1">
    <citation type="submission" date="2007-04" db="EMBL/GenBank/DDBJ databases">
        <title>Complete genome sequence of the nitrogen-fixing bacterium Azorhizobium caulinodans ORS571.</title>
        <authorList>
            <person name="Lee K.B."/>
            <person name="Backer P.D."/>
            <person name="Aono T."/>
            <person name="Liu C.T."/>
            <person name="Suzuki S."/>
            <person name="Suzuki T."/>
            <person name="Kaneko T."/>
            <person name="Yamada M."/>
            <person name="Tabata S."/>
            <person name="Kupfer D.M."/>
            <person name="Najar F.Z."/>
            <person name="Wiley G.B."/>
            <person name="Roe B."/>
            <person name="Binnewies T."/>
            <person name="Ussery D."/>
            <person name="Vereecke D."/>
            <person name="Gevers D."/>
            <person name="Holsters M."/>
            <person name="Oyaizu H."/>
        </authorList>
    </citation>
    <scope>NUCLEOTIDE SEQUENCE [LARGE SCALE GENOMIC DNA]</scope>
    <source>
        <strain>ATCC 43989 / DSM 5975 / JCM 20966 / LMG 6465 / NBRC 14845 / NCIMB 13405 / ORS 571</strain>
    </source>
</reference>
<accession>A8I4I6</accession>
<feature type="chain" id="PRO_1000071806" description="Sec-independent protein translocase protein TatA">
    <location>
        <begin position="1"/>
        <end position="75"/>
    </location>
</feature>
<feature type="transmembrane region" description="Helical" evidence="1">
    <location>
        <begin position="1"/>
        <end position="21"/>
    </location>
</feature>
<feature type="region of interest" description="Disordered" evidence="2">
    <location>
        <begin position="43"/>
        <end position="75"/>
    </location>
</feature>
<evidence type="ECO:0000255" key="1">
    <source>
        <dbReference type="HAMAP-Rule" id="MF_00236"/>
    </source>
</evidence>
<evidence type="ECO:0000256" key="2">
    <source>
        <dbReference type="SAM" id="MobiDB-lite"/>
    </source>
</evidence>
<sequence length="75" mass="8023">MGSMSIWHWIVVLAVVLLLFGRGKISDLMGDVAKGIKSFKKGMAEDDDAPAKPAEPPRAVPHQATPAPESEKKAV</sequence>
<keyword id="KW-0997">Cell inner membrane</keyword>
<keyword id="KW-1003">Cell membrane</keyword>
<keyword id="KW-0472">Membrane</keyword>
<keyword id="KW-0653">Protein transport</keyword>
<keyword id="KW-1185">Reference proteome</keyword>
<keyword id="KW-0811">Translocation</keyword>
<keyword id="KW-0812">Transmembrane</keyword>
<keyword id="KW-1133">Transmembrane helix</keyword>
<keyword id="KW-0813">Transport</keyword>
<organism>
    <name type="scientific">Azorhizobium caulinodans (strain ATCC 43989 / DSM 5975 / JCM 20966 / LMG 6465 / NBRC 14845 / NCIMB 13405 / ORS 571)</name>
    <dbReference type="NCBI Taxonomy" id="438753"/>
    <lineage>
        <taxon>Bacteria</taxon>
        <taxon>Pseudomonadati</taxon>
        <taxon>Pseudomonadota</taxon>
        <taxon>Alphaproteobacteria</taxon>
        <taxon>Hyphomicrobiales</taxon>
        <taxon>Xanthobacteraceae</taxon>
        <taxon>Azorhizobium</taxon>
    </lineage>
</organism>
<comment type="function">
    <text evidence="1">Part of the twin-arginine translocation (Tat) system that transports large folded proteins containing a characteristic twin-arginine motif in their signal peptide across membranes. TatA could form the protein-conducting channel of the Tat system.</text>
</comment>
<comment type="subunit">
    <text evidence="1">The Tat system comprises two distinct complexes: a TatABC complex, containing multiple copies of TatA, TatB and TatC subunits, and a separate TatA complex, containing only TatA subunits. Substrates initially bind to the TatABC complex, which probably triggers association of the separate TatA complex to form the active translocon.</text>
</comment>
<comment type="subcellular location">
    <subcellularLocation>
        <location evidence="1">Cell inner membrane</location>
        <topology evidence="1">Single-pass membrane protein</topology>
    </subcellularLocation>
</comment>
<comment type="similarity">
    <text evidence="1">Belongs to the TatA/E family.</text>
</comment>
<protein>
    <recommendedName>
        <fullName evidence="1">Sec-independent protein translocase protein TatA</fullName>
    </recommendedName>
</protein>
<gene>
    <name evidence="1" type="primary">tatA</name>
    <name type="ordered locus">AZC_1736</name>
</gene>
<name>TATA_AZOC5</name>
<proteinExistence type="inferred from homology"/>